<gene>
    <name evidence="1" type="primary">fucI</name>
    <name type="ordered locus">SSPA2646</name>
</gene>
<evidence type="ECO:0000255" key="1">
    <source>
        <dbReference type="HAMAP-Rule" id="MF_01254"/>
    </source>
</evidence>
<reference key="1">
    <citation type="journal article" date="2009" name="BMC Genomics">
        <title>Pseudogene accumulation in the evolutionary histories of Salmonella enterica serovars Paratyphi A and Typhi.</title>
        <authorList>
            <person name="Holt K.E."/>
            <person name="Thomson N.R."/>
            <person name="Wain J."/>
            <person name="Langridge G.C."/>
            <person name="Hasan R."/>
            <person name="Bhutta Z.A."/>
            <person name="Quail M.A."/>
            <person name="Norbertczak H."/>
            <person name="Walker D."/>
            <person name="Simmonds M."/>
            <person name="White B."/>
            <person name="Bason N."/>
            <person name="Mungall K."/>
            <person name="Dougan G."/>
            <person name="Parkhill J."/>
        </authorList>
    </citation>
    <scope>NUCLEOTIDE SEQUENCE [LARGE SCALE GENOMIC DNA]</scope>
    <source>
        <strain>AKU_12601</strain>
    </source>
</reference>
<keyword id="KW-0119">Carbohydrate metabolism</keyword>
<keyword id="KW-0963">Cytoplasm</keyword>
<keyword id="KW-0294">Fucose metabolism</keyword>
<keyword id="KW-0413">Isomerase</keyword>
<keyword id="KW-0464">Manganese</keyword>
<keyword id="KW-0479">Metal-binding</keyword>
<accession>B5BF31</accession>
<organism>
    <name type="scientific">Salmonella paratyphi A (strain AKU_12601)</name>
    <dbReference type="NCBI Taxonomy" id="554290"/>
    <lineage>
        <taxon>Bacteria</taxon>
        <taxon>Pseudomonadati</taxon>
        <taxon>Pseudomonadota</taxon>
        <taxon>Gammaproteobacteria</taxon>
        <taxon>Enterobacterales</taxon>
        <taxon>Enterobacteriaceae</taxon>
        <taxon>Salmonella</taxon>
    </lineage>
</organism>
<dbReference type="EC" id="5.3.1.25" evidence="1"/>
<dbReference type="EMBL" id="FM200053">
    <property type="protein sequence ID" value="CAR60888.1"/>
    <property type="molecule type" value="Genomic_DNA"/>
</dbReference>
<dbReference type="RefSeq" id="WP_000724126.1">
    <property type="nucleotide sequence ID" value="NC_011147.1"/>
</dbReference>
<dbReference type="SMR" id="B5BF31"/>
<dbReference type="KEGG" id="sek:SSPA2646"/>
<dbReference type="HOGENOM" id="CLU_033326_1_0_6"/>
<dbReference type="UniPathway" id="UPA00563">
    <property type="reaction ID" value="UER00624"/>
</dbReference>
<dbReference type="Proteomes" id="UP000001869">
    <property type="component" value="Chromosome"/>
</dbReference>
<dbReference type="GO" id="GO:0005737">
    <property type="term" value="C:cytoplasm"/>
    <property type="evidence" value="ECO:0007669"/>
    <property type="project" value="UniProtKB-SubCell"/>
</dbReference>
<dbReference type="GO" id="GO:0008790">
    <property type="term" value="F:arabinose isomerase activity"/>
    <property type="evidence" value="ECO:0007669"/>
    <property type="project" value="TreeGrafter"/>
</dbReference>
<dbReference type="GO" id="GO:0008736">
    <property type="term" value="F:L-fucose isomerase activity"/>
    <property type="evidence" value="ECO:0007669"/>
    <property type="project" value="UniProtKB-UniRule"/>
</dbReference>
<dbReference type="GO" id="GO:0030145">
    <property type="term" value="F:manganese ion binding"/>
    <property type="evidence" value="ECO:0007669"/>
    <property type="project" value="UniProtKB-UniRule"/>
</dbReference>
<dbReference type="GO" id="GO:0019571">
    <property type="term" value="P:D-arabinose catabolic process"/>
    <property type="evidence" value="ECO:0007669"/>
    <property type="project" value="TreeGrafter"/>
</dbReference>
<dbReference type="GO" id="GO:0042355">
    <property type="term" value="P:L-fucose catabolic process"/>
    <property type="evidence" value="ECO:0007669"/>
    <property type="project" value="UniProtKB-UniRule"/>
</dbReference>
<dbReference type="FunFam" id="3.20.14.10:FF:000001">
    <property type="entry name" value="L-fucose isomerase"/>
    <property type="match status" value="1"/>
</dbReference>
<dbReference type="FunFam" id="3.40.275.10:FF:000001">
    <property type="entry name" value="L-fucose isomerase"/>
    <property type="match status" value="1"/>
</dbReference>
<dbReference type="FunFam" id="3.40.50.1070:FF:000001">
    <property type="entry name" value="L-fucose isomerase"/>
    <property type="match status" value="1"/>
</dbReference>
<dbReference type="Gene3D" id="3.40.50.1070">
    <property type="match status" value="1"/>
</dbReference>
<dbReference type="Gene3D" id="3.40.275.10">
    <property type="entry name" value="L-fucose Isomerase, Chain A, domain 2"/>
    <property type="match status" value="1"/>
</dbReference>
<dbReference type="Gene3D" id="3.20.14.10">
    <property type="entry name" value="L-fucose/L-arabinose isomerase, C-terminal"/>
    <property type="match status" value="1"/>
</dbReference>
<dbReference type="HAMAP" id="MF_01254">
    <property type="entry name" value="Fucose_iso"/>
    <property type="match status" value="1"/>
</dbReference>
<dbReference type="InterPro" id="IPR004216">
    <property type="entry name" value="Fuc/Ara_isomerase_C"/>
</dbReference>
<dbReference type="InterPro" id="IPR038393">
    <property type="entry name" value="Fuc_iso_dom3_sf"/>
</dbReference>
<dbReference type="InterPro" id="IPR015888">
    <property type="entry name" value="Fuc_isomerase_C"/>
</dbReference>
<dbReference type="InterPro" id="IPR038391">
    <property type="entry name" value="Fucose_iso_dom1_sf"/>
</dbReference>
<dbReference type="InterPro" id="IPR012888">
    <property type="entry name" value="Fucose_iso_N1"/>
</dbReference>
<dbReference type="InterPro" id="IPR005763">
    <property type="entry name" value="Fucose_isomerase"/>
</dbReference>
<dbReference type="InterPro" id="IPR038392">
    <property type="entry name" value="Fucose_isomerase_dom2_sf"/>
</dbReference>
<dbReference type="InterPro" id="IPR009015">
    <property type="entry name" value="Fucose_isomerase_N/cen_sf"/>
</dbReference>
<dbReference type="InterPro" id="IPR012889">
    <property type="entry name" value="Fucose_isomerase_N2"/>
</dbReference>
<dbReference type="NCBIfam" id="TIGR01089">
    <property type="entry name" value="fucI"/>
    <property type="match status" value="1"/>
</dbReference>
<dbReference type="NCBIfam" id="NF008220">
    <property type="entry name" value="PRK10991.1"/>
    <property type="match status" value="1"/>
</dbReference>
<dbReference type="PANTHER" id="PTHR37840">
    <property type="entry name" value="L-FUCOSE ISOMERASE"/>
    <property type="match status" value="1"/>
</dbReference>
<dbReference type="PANTHER" id="PTHR37840:SF1">
    <property type="entry name" value="L-FUCOSE ISOMERASE"/>
    <property type="match status" value="1"/>
</dbReference>
<dbReference type="Pfam" id="PF02952">
    <property type="entry name" value="Fucose_iso_C"/>
    <property type="match status" value="1"/>
</dbReference>
<dbReference type="Pfam" id="PF07881">
    <property type="entry name" value="Fucose_iso_N1"/>
    <property type="match status" value="1"/>
</dbReference>
<dbReference type="Pfam" id="PF07882">
    <property type="entry name" value="Fucose_iso_N2"/>
    <property type="match status" value="1"/>
</dbReference>
<dbReference type="SUPFAM" id="SSF50443">
    <property type="entry name" value="FucI/AraA C-terminal domain-like"/>
    <property type="match status" value="1"/>
</dbReference>
<dbReference type="SUPFAM" id="SSF53743">
    <property type="entry name" value="FucI/AraA N-terminal and middle domains"/>
    <property type="match status" value="1"/>
</dbReference>
<proteinExistence type="inferred from homology"/>
<protein>
    <recommendedName>
        <fullName evidence="1">L-fucose isomerase</fullName>
        <ecNumber evidence="1">5.3.1.25</ecNumber>
    </recommendedName>
    <alternativeName>
        <fullName evidence="1">6-deoxy-L-galactose isomerase</fullName>
    </alternativeName>
    <alternativeName>
        <fullName>FucIase</fullName>
    </alternativeName>
</protein>
<sequence length="591" mass="64771">MKKISLPKIGIRPVIDGRRMGVRESLEEQTMNMAKATAALITEKIRHACGAQVECVIADTCIAGMAESAACEEKFSSQNVGVTITVTPCWCYGSETIDMDPMRPKAIWGFNGTERPGAVYLAAALAAHSQKGIPAFSIYGHDVQDADDTSIPADVEEKLLRFARAGLAVASMKGKSYLSVGGVSMGIAGSIVDHNFFESWLGMKVQAVDMTELRRRIDQKIYDEAELEMALAWADKNFRYGEDQNASQYKRNEAQNRAVLKESLLMAMCIRDMMQGNKTLADKGLVEESLGYNAIAAGFQGQRHWTDQYPNGDTAEALLNSSFDWNGVREPFVVATENDSLNGVAMLFGHQLTGTAQIFADVRTYWSPEAVERVTGQALSGLAEHGIIHLINSGSAALDGACKQRDSEGKPTMKPHWEISQQEADACLAATEWCPAIHEYFRGGGYSSRFLTEGGVPFTMTRVNIIKGLGPVLQIAEGWSVELPKAMHDQLDARTNSTWPTTWFAPRLTGKGPFTDVYSVMANWGANHGVLTIGHVGADFITLAAMLRIPVCMHNVEEAKIYRPSAWAAHGMDIEGQDYRACQNYGPLYKR</sequence>
<feature type="chain" id="PRO_1000139963" description="L-fucose isomerase">
    <location>
        <begin position="1"/>
        <end position="591"/>
    </location>
</feature>
<feature type="active site" description="Proton acceptor" evidence="1">
    <location>
        <position position="337"/>
    </location>
</feature>
<feature type="active site" description="Proton acceptor" evidence="1">
    <location>
        <position position="361"/>
    </location>
</feature>
<feature type="binding site" evidence="1">
    <location>
        <position position="337"/>
    </location>
    <ligand>
        <name>Mn(2+)</name>
        <dbReference type="ChEBI" id="CHEBI:29035"/>
    </ligand>
</feature>
<feature type="binding site" evidence="1">
    <location>
        <position position="361"/>
    </location>
    <ligand>
        <name>Mn(2+)</name>
        <dbReference type="ChEBI" id="CHEBI:29035"/>
    </ligand>
</feature>
<feature type="binding site" evidence="1">
    <location>
        <position position="528"/>
    </location>
    <ligand>
        <name>Mn(2+)</name>
        <dbReference type="ChEBI" id="CHEBI:29035"/>
    </ligand>
</feature>
<comment type="function">
    <text evidence="1">Converts the aldose L-fucose into the corresponding ketose L-fuculose.</text>
</comment>
<comment type="catalytic activity">
    <reaction evidence="1">
        <text>L-fucose = L-fuculose</text>
        <dbReference type="Rhea" id="RHEA:17233"/>
        <dbReference type="ChEBI" id="CHEBI:2181"/>
        <dbReference type="ChEBI" id="CHEBI:17617"/>
        <dbReference type="EC" id="5.3.1.25"/>
    </reaction>
</comment>
<comment type="cofactor">
    <cofactor evidence="1">
        <name>Mn(2+)</name>
        <dbReference type="ChEBI" id="CHEBI:29035"/>
    </cofactor>
</comment>
<comment type="pathway">
    <text evidence="1">Carbohydrate degradation; L-fucose degradation; L-lactaldehyde and glycerone phosphate from L-fucose: step 1/3.</text>
</comment>
<comment type="subunit">
    <text evidence="1">Homohexamer.</text>
</comment>
<comment type="subcellular location">
    <subcellularLocation>
        <location evidence="1">Cytoplasm</location>
    </subcellularLocation>
</comment>
<comment type="similarity">
    <text evidence="1">Belongs to the L-fucose isomerase family.</text>
</comment>
<name>FUCI_SALPK</name>